<keyword id="KW-0217">Developmental protein</keyword>
<keyword id="KW-0238">DNA-binding</keyword>
<keyword id="KW-0371">Homeobox</keyword>
<keyword id="KW-0440">LIM domain</keyword>
<keyword id="KW-0479">Metal-binding</keyword>
<keyword id="KW-0539">Nucleus</keyword>
<keyword id="KW-1185">Reference proteome</keyword>
<keyword id="KW-0677">Repeat</keyword>
<keyword id="KW-0804">Transcription</keyword>
<keyword id="KW-0805">Transcription regulation</keyword>
<keyword id="KW-0862">Zinc</keyword>
<sequence length="402" mass="44959">MMAHCAGCERPILDRFLLNVLDRAWHVKCVQCCECKCNLTEKCFSREGKLYCKTDFFRRFGTKCAGCSLGISPSDLVRKARNKVFHLNCFTCMVCNKQLSTGEELYIIDENKFVCKEDYISASSLKESSLNSVSSCTDRSLSPDIQDPIQDESKETDHSTSSDKETANNENEEQNSGTKRRGPRTTIKAKQLETLKAAFIATPKPTRHIREQLAQETGLNMRVIQVWFQNRRSKERRMKQLSALGARRHAFFRSPRRMRPLGGRLDESEILSSGPYSYYGDYQGDYYGSGNYDFFPHGPPSSQTQSPADSSYLQNSGPGSTPLGPLESQLSGHHPSENQRYVDMISHPDTPSPEPGMTGPLHPISGEVFTGGPSPPFSMSNNSGFSGPLPHQNLDINEATVW</sequence>
<accession>P37137</accession>
<accession>Q5U5E0</accession>
<protein>
    <recommendedName>
        <fullName>LIM/homeobox protein Lhx5</fullName>
        <shortName>LIM homeobox protein 5</shortName>
    </recommendedName>
    <alternativeName>
        <fullName>Homeobox protein LIM-5</fullName>
        <shortName>xLIM-5</shortName>
    </alternativeName>
    <alternativeName>
        <fullName>xLIM-2A</fullName>
    </alternativeName>
</protein>
<organism>
    <name type="scientific">Xenopus laevis</name>
    <name type="common">African clawed frog</name>
    <dbReference type="NCBI Taxonomy" id="8355"/>
    <lineage>
        <taxon>Eukaryota</taxon>
        <taxon>Metazoa</taxon>
        <taxon>Chordata</taxon>
        <taxon>Craniata</taxon>
        <taxon>Vertebrata</taxon>
        <taxon>Euteleostomi</taxon>
        <taxon>Amphibia</taxon>
        <taxon>Batrachia</taxon>
        <taxon>Anura</taxon>
        <taxon>Pipoidea</taxon>
        <taxon>Pipidae</taxon>
        <taxon>Xenopodinae</taxon>
        <taxon>Xenopus</taxon>
        <taxon>Xenopus</taxon>
    </lineage>
</organism>
<gene>
    <name type="primary">lhx5</name>
    <name type="synonym">lim2a</name>
    <name type="synonym">lim5</name>
</gene>
<proteinExistence type="evidence at protein level"/>
<dbReference type="EMBL" id="L42546">
    <property type="protein sequence ID" value="AAA99464.1"/>
    <property type="molecule type" value="mRNA"/>
</dbReference>
<dbReference type="EMBL" id="BC084744">
    <property type="protein sequence ID" value="AAH84744.1"/>
    <property type="molecule type" value="mRNA"/>
</dbReference>
<dbReference type="EMBL" id="Z11587">
    <property type="protein sequence ID" value="CAA77672.1"/>
    <property type="molecule type" value="mRNA"/>
</dbReference>
<dbReference type="PIR" id="S23803">
    <property type="entry name" value="S23803"/>
</dbReference>
<dbReference type="RefSeq" id="NP_001084038.1">
    <property type="nucleotide sequence ID" value="NM_001090569.1"/>
</dbReference>
<dbReference type="SMR" id="P37137"/>
<dbReference type="DNASU" id="399270"/>
<dbReference type="GeneID" id="399270"/>
<dbReference type="KEGG" id="xla:399270"/>
<dbReference type="AGR" id="Xenbase:XB-GENE-865965"/>
<dbReference type="CTD" id="399270"/>
<dbReference type="Xenbase" id="XB-GENE-865965">
    <property type="gene designation" value="lhx5.S"/>
</dbReference>
<dbReference type="OrthoDB" id="10068367at2759"/>
<dbReference type="Proteomes" id="UP000186698">
    <property type="component" value="Chromosome 1S"/>
</dbReference>
<dbReference type="Bgee" id="399270">
    <property type="expression patterns" value="Expressed in gastrula and 16 other cell types or tissues"/>
</dbReference>
<dbReference type="GO" id="GO:0005634">
    <property type="term" value="C:nucleus"/>
    <property type="evidence" value="ECO:0000318"/>
    <property type="project" value="GO_Central"/>
</dbReference>
<dbReference type="GO" id="GO:0000981">
    <property type="term" value="F:DNA-binding transcription factor activity, RNA polymerase II-specific"/>
    <property type="evidence" value="ECO:0000318"/>
    <property type="project" value="GO_Central"/>
</dbReference>
<dbReference type="GO" id="GO:0000977">
    <property type="term" value="F:RNA polymerase II transcription regulatory region sequence-specific DNA binding"/>
    <property type="evidence" value="ECO:0000318"/>
    <property type="project" value="GO_Central"/>
</dbReference>
<dbReference type="GO" id="GO:0001221">
    <property type="term" value="F:transcription coregulator binding"/>
    <property type="evidence" value="ECO:0000353"/>
    <property type="project" value="UniProtKB"/>
</dbReference>
<dbReference type="GO" id="GO:0008270">
    <property type="term" value="F:zinc ion binding"/>
    <property type="evidence" value="ECO:0007669"/>
    <property type="project" value="InterPro"/>
</dbReference>
<dbReference type="GO" id="GO:0030182">
    <property type="term" value="P:neuron differentiation"/>
    <property type="evidence" value="ECO:0000318"/>
    <property type="project" value="GO_Central"/>
</dbReference>
<dbReference type="GO" id="GO:0006357">
    <property type="term" value="P:regulation of transcription by RNA polymerase II"/>
    <property type="evidence" value="ECO:0000318"/>
    <property type="project" value="GO_Central"/>
</dbReference>
<dbReference type="CDD" id="cd00086">
    <property type="entry name" value="homeodomain"/>
    <property type="match status" value="1"/>
</dbReference>
<dbReference type="CDD" id="cd09367">
    <property type="entry name" value="LIM1_Lhx1_Lhx5"/>
    <property type="match status" value="1"/>
</dbReference>
<dbReference type="CDD" id="cd09375">
    <property type="entry name" value="LIM2_Lhx1_Lhx5"/>
    <property type="match status" value="1"/>
</dbReference>
<dbReference type="FunFam" id="2.10.110.10:FF:000120">
    <property type="entry name" value="Insulin gene enhancer protein ISL-2"/>
    <property type="match status" value="1"/>
</dbReference>
<dbReference type="FunFam" id="1.10.10.60:FF:000075">
    <property type="entry name" value="LIM/homeobox protein Lhx1"/>
    <property type="match status" value="1"/>
</dbReference>
<dbReference type="FunFam" id="2.10.110.10:FF:000046">
    <property type="entry name" value="LIM/homeobox protein Lhx1"/>
    <property type="match status" value="1"/>
</dbReference>
<dbReference type="Gene3D" id="2.10.110.10">
    <property type="entry name" value="Cysteine Rich Protein"/>
    <property type="match status" value="2"/>
</dbReference>
<dbReference type="Gene3D" id="1.10.10.60">
    <property type="entry name" value="Homeodomain-like"/>
    <property type="match status" value="1"/>
</dbReference>
<dbReference type="InterPro" id="IPR001356">
    <property type="entry name" value="HD"/>
</dbReference>
<dbReference type="InterPro" id="IPR017970">
    <property type="entry name" value="Homeobox_CS"/>
</dbReference>
<dbReference type="InterPro" id="IPR009057">
    <property type="entry name" value="Homeodomain-like_sf"/>
</dbReference>
<dbReference type="InterPro" id="IPR049618">
    <property type="entry name" value="Lhx1/5_LIM1"/>
</dbReference>
<dbReference type="InterPro" id="IPR049619">
    <property type="entry name" value="Lhx1/5_LIM2"/>
</dbReference>
<dbReference type="InterPro" id="IPR050453">
    <property type="entry name" value="LIM_Homeobox_TF"/>
</dbReference>
<dbReference type="InterPro" id="IPR001781">
    <property type="entry name" value="Znf_LIM"/>
</dbReference>
<dbReference type="PANTHER" id="PTHR24208">
    <property type="entry name" value="LIM/HOMEOBOX PROTEIN LHX"/>
    <property type="match status" value="1"/>
</dbReference>
<dbReference type="PANTHER" id="PTHR24208:SF115">
    <property type="entry name" value="LIM_HOMEOBOX PROTEIN LHX5"/>
    <property type="match status" value="1"/>
</dbReference>
<dbReference type="Pfam" id="PF00046">
    <property type="entry name" value="Homeodomain"/>
    <property type="match status" value="1"/>
</dbReference>
<dbReference type="Pfam" id="PF00412">
    <property type="entry name" value="LIM"/>
    <property type="match status" value="2"/>
</dbReference>
<dbReference type="SMART" id="SM00389">
    <property type="entry name" value="HOX"/>
    <property type="match status" value="1"/>
</dbReference>
<dbReference type="SMART" id="SM00132">
    <property type="entry name" value="LIM"/>
    <property type="match status" value="2"/>
</dbReference>
<dbReference type="SUPFAM" id="SSF57716">
    <property type="entry name" value="Glucocorticoid receptor-like (DNA-binding domain)"/>
    <property type="match status" value="2"/>
</dbReference>
<dbReference type="SUPFAM" id="SSF46689">
    <property type="entry name" value="Homeodomain-like"/>
    <property type="match status" value="1"/>
</dbReference>
<dbReference type="PROSITE" id="PS00027">
    <property type="entry name" value="HOMEOBOX_1"/>
    <property type="match status" value="1"/>
</dbReference>
<dbReference type="PROSITE" id="PS50071">
    <property type="entry name" value="HOMEOBOX_2"/>
    <property type="match status" value="1"/>
</dbReference>
<dbReference type="PROSITE" id="PS00478">
    <property type="entry name" value="LIM_DOMAIN_1"/>
    <property type="match status" value="2"/>
</dbReference>
<dbReference type="PROSITE" id="PS50023">
    <property type="entry name" value="LIM_DOMAIN_2"/>
    <property type="match status" value="2"/>
</dbReference>
<reference key="1">
    <citation type="journal article" date="1995" name="Dev. Biol.">
        <title>The LIM class homeobox gene lim5: implied role in CNS patterning in Xenopus and zebrafish.</title>
        <authorList>
            <person name="Toyama R."/>
            <person name="Curtiss P.E."/>
            <person name="Otani H."/>
            <person name="Kimura M."/>
            <person name="Dawid I.B."/>
            <person name="Taira M."/>
        </authorList>
    </citation>
    <scope>NUCLEOTIDE SEQUENCE [MRNA]</scope>
    <source>
        <tissue>Gastrula</tissue>
    </source>
</reference>
<reference key="2">
    <citation type="submission" date="2004-10" db="EMBL/GenBank/DDBJ databases">
        <authorList>
            <consortium name="NIH - Xenopus Gene Collection (XGC) project"/>
        </authorList>
    </citation>
    <scope>NUCLEOTIDE SEQUENCE [LARGE SCALE MRNA]</scope>
    <source>
        <tissue>Gastrula</tissue>
    </source>
</reference>
<reference key="3">
    <citation type="journal article" date="2003" name="Development">
        <title>Selective degradation of excess Ldb1 by Rnf12/RLIM confers proper Ldb1 expression levels and Xlim-1/Ldb1 stoichiometry in Xenopus organizer functions.</title>
        <authorList>
            <person name="Hiratani I."/>
            <person name="Yamamoto N."/>
            <person name="Mochizuki T."/>
            <person name="Ohmori S.-Y."/>
            <person name="Taira M."/>
        </authorList>
    </citation>
    <scope>INTERACTION WITH LDB1 AND RNF12</scope>
</reference>
<reference key="4">
    <citation type="journal article" date="1992" name="Genes Dev.">
        <title>The LIM domain-containing homeo box gene Xlim-1 is expressed specifically in the organizer region of Xenopus gastrula embryos.</title>
        <authorList>
            <person name="Taira M."/>
            <person name="Jamrich M."/>
            <person name="Good P.J."/>
            <person name="Dawid I.B."/>
        </authorList>
    </citation>
    <scope>NUCLEOTIDE SEQUENCE [MRNA] OF 188-225</scope>
</reference>
<feature type="chain" id="PRO_0000075793" description="LIM/homeobox protein Lhx5">
    <location>
        <begin position="1"/>
        <end position="402"/>
    </location>
</feature>
<feature type="domain" description="LIM zinc-binding 1" evidence="2">
    <location>
        <begin position="3"/>
        <end position="61"/>
    </location>
</feature>
<feature type="domain" description="LIM zinc-binding 2" evidence="2">
    <location>
        <begin position="62"/>
        <end position="125"/>
    </location>
</feature>
<feature type="DNA-binding region" description="Homeobox" evidence="1">
    <location>
        <begin position="180"/>
        <end position="239"/>
    </location>
</feature>
<feature type="region of interest" description="Disordered" evidence="3">
    <location>
        <begin position="133"/>
        <end position="187"/>
    </location>
</feature>
<feature type="region of interest" description="Disordered" evidence="3">
    <location>
        <begin position="291"/>
        <end position="335"/>
    </location>
</feature>
<feature type="region of interest" description="Disordered" evidence="3">
    <location>
        <begin position="365"/>
        <end position="392"/>
    </location>
</feature>
<feature type="compositionally biased region" description="Basic and acidic residues" evidence="3">
    <location>
        <begin position="151"/>
        <end position="167"/>
    </location>
</feature>
<feature type="compositionally biased region" description="Polar residues" evidence="3">
    <location>
        <begin position="300"/>
        <end position="319"/>
    </location>
</feature>
<name>LHX5_XENLA</name>
<comment type="function">
    <text>Probably involved in the patterning of the nervous system, in particular in the early specification of the diencephalon.</text>
</comment>
<comment type="subunit">
    <text evidence="4">Interacts with ldb1 and with the N-terminus of rnf12.</text>
</comment>
<comment type="subcellular location">
    <subcellularLocation>
        <location evidence="5">Nucleus</location>
    </subcellularLocation>
</comment>
<evidence type="ECO:0000255" key="1">
    <source>
        <dbReference type="PROSITE-ProRule" id="PRU00108"/>
    </source>
</evidence>
<evidence type="ECO:0000255" key="2">
    <source>
        <dbReference type="PROSITE-ProRule" id="PRU00125"/>
    </source>
</evidence>
<evidence type="ECO:0000256" key="3">
    <source>
        <dbReference type="SAM" id="MobiDB-lite"/>
    </source>
</evidence>
<evidence type="ECO:0000269" key="4">
    <source>
    </source>
</evidence>
<evidence type="ECO:0000305" key="5"/>